<feature type="chain" id="PRO_0000375576" description="Succinyl-diaminopimelate desuccinylase">
    <location>
        <begin position="1"/>
        <end position="377"/>
    </location>
</feature>
<feature type="active site" evidence="1">
    <location>
        <position position="69"/>
    </location>
</feature>
<feature type="active site" description="Proton acceptor" evidence="1">
    <location>
        <position position="134"/>
    </location>
</feature>
<feature type="binding site" evidence="1">
    <location>
        <position position="67"/>
    </location>
    <ligand>
        <name>Zn(2+)</name>
        <dbReference type="ChEBI" id="CHEBI:29105"/>
        <label>1</label>
    </ligand>
</feature>
<feature type="binding site" evidence="1">
    <location>
        <position position="100"/>
    </location>
    <ligand>
        <name>Zn(2+)</name>
        <dbReference type="ChEBI" id="CHEBI:29105"/>
        <label>1</label>
    </ligand>
</feature>
<feature type="binding site" evidence="1">
    <location>
        <position position="100"/>
    </location>
    <ligand>
        <name>Zn(2+)</name>
        <dbReference type="ChEBI" id="CHEBI:29105"/>
        <label>2</label>
    </ligand>
</feature>
<feature type="binding site" evidence="1">
    <location>
        <position position="135"/>
    </location>
    <ligand>
        <name>Zn(2+)</name>
        <dbReference type="ChEBI" id="CHEBI:29105"/>
        <label>2</label>
    </ligand>
</feature>
<feature type="binding site" evidence="1">
    <location>
        <position position="163"/>
    </location>
    <ligand>
        <name>Zn(2+)</name>
        <dbReference type="ChEBI" id="CHEBI:29105"/>
        <label>1</label>
    </ligand>
</feature>
<feature type="binding site" evidence="1">
    <location>
        <position position="349"/>
    </location>
    <ligand>
        <name>Zn(2+)</name>
        <dbReference type="ChEBI" id="CHEBI:29105"/>
        <label>2</label>
    </ligand>
</feature>
<protein>
    <recommendedName>
        <fullName evidence="1">Succinyl-diaminopimelate desuccinylase</fullName>
        <shortName evidence="1">SDAP desuccinylase</shortName>
        <ecNumber evidence="1">3.5.1.18</ecNumber>
    </recommendedName>
    <alternativeName>
        <fullName evidence="1">N-succinyl-LL-2,6-diaminoheptanedioate amidohydrolase</fullName>
    </alternativeName>
</protein>
<evidence type="ECO:0000255" key="1">
    <source>
        <dbReference type="HAMAP-Rule" id="MF_01690"/>
    </source>
</evidence>
<comment type="function">
    <text evidence="1">Catalyzes the hydrolysis of N-succinyl-L,L-diaminopimelic acid (SDAP), forming succinate and LL-2,6-diaminopimelate (DAP), an intermediate involved in the bacterial biosynthesis of lysine and meso-diaminopimelic acid, an essential component of bacterial cell walls.</text>
</comment>
<comment type="catalytic activity">
    <reaction evidence="1">
        <text>N-succinyl-(2S,6S)-2,6-diaminopimelate + H2O = (2S,6S)-2,6-diaminopimelate + succinate</text>
        <dbReference type="Rhea" id="RHEA:22608"/>
        <dbReference type="ChEBI" id="CHEBI:15377"/>
        <dbReference type="ChEBI" id="CHEBI:30031"/>
        <dbReference type="ChEBI" id="CHEBI:57609"/>
        <dbReference type="ChEBI" id="CHEBI:58087"/>
        <dbReference type="EC" id="3.5.1.18"/>
    </reaction>
</comment>
<comment type="cofactor">
    <cofactor evidence="1">
        <name>Zn(2+)</name>
        <dbReference type="ChEBI" id="CHEBI:29105"/>
    </cofactor>
    <cofactor evidence="1">
        <name>Co(2+)</name>
        <dbReference type="ChEBI" id="CHEBI:48828"/>
    </cofactor>
    <text evidence="1">Binds 2 Zn(2+) or Co(2+) ions per subunit.</text>
</comment>
<comment type="pathway">
    <text evidence="1">Amino-acid biosynthesis; L-lysine biosynthesis via DAP pathway; LL-2,6-diaminopimelate from (S)-tetrahydrodipicolinate (succinylase route): step 3/3.</text>
</comment>
<comment type="subunit">
    <text evidence="1">Homodimer.</text>
</comment>
<comment type="similarity">
    <text evidence="1">Belongs to the peptidase M20A family. DapE subfamily.</text>
</comment>
<gene>
    <name evidence="1" type="primary">dapE</name>
    <name type="ordered locus">NTHI0182</name>
</gene>
<keyword id="KW-0028">Amino-acid biosynthesis</keyword>
<keyword id="KW-0170">Cobalt</keyword>
<keyword id="KW-0220">Diaminopimelate biosynthesis</keyword>
<keyword id="KW-0378">Hydrolase</keyword>
<keyword id="KW-0457">Lysine biosynthesis</keyword>
<keyword id="KW-0479">Metal-binding</keyword>
<keyword id="KW-0862">Zinc</keyword>
<dbReference type="EC" id="3.5.1.18" evidence="1"/>
<dbReference type="EMBL" id="CP000057">
    <property type="protein sequence ID" value="AAX87164.1"/>
    <property type="molecule type" value="Genomic_DNA"/>
</dbReference>
<dbReference type="RefSeq" id="WP_005687633.1">
    <property type="nucleotide sequence ID" value="NC_007146.2"/>
</dbReference>
<dbReference type="SMR" id="Q4QP83"/>
<dbReference type="KEGG" id="hit:NTHI0182"/>
<dbReference type="HOGENOM" id="CLU_021802_4_0_6"/>
<dbReference type="UniPathway" id="UPA00034">
    <property type="reaction ID" value="UER00021"/>
</dbReference>
<dbReference type="Proteomes" id="UP000002525">
    <property type="component" value="Chromosome"/>
</dbReference>
<dbReference type="GO" id="GO:0008777">
    <property type="term" value="F:acetylornithine deacetylase activity"/>
    <property type="evidence" value="ECO:0007669"/>
    <property type="project" value="TreeGrafter"/>
</dbReference>
<dbReference type="GO" id="GO:0050897">
    <property type="term" value="F:cobalt ion binding"/>
    <property type="evidence" value="ECO:0007669"/>
    <property type="project" value="UniProtKB-UniRule"/>
</dbReference>
<dbReference type="GO" id="GO:0009014">
    <property type="term" value="F:succinyl-diaminopimelate desuccinylase activity"/>
    <property type="evidence" value="ECO:0007669"/>
    <property type="project" value="UniProtKB-UniRule"/>
</dbReference>
<dbReference type="GO" id="GO:0008270">
    <property type="term" value="F:zinc ion binding"/>
    <property type="evidence" value="ECO:0007669"/>
    <property type="project" value="UniProtKB-UniRule"/>
</dbReference>
<dbReference type="GO" id="GO:0019877">
    <property type="term" value="P:diaminopimelate biosynthetic process"/>
    <property type="evidence" value="ECO:0007669"/>
    <property type="project" value="UniProtKB-UniRule"/>
</dbReference>
<dbReference type="GO" id="GO:0006526">
    <property type="term" value="P:L-arginine biosynthetic process"/>
    <property type="evidence" value="ECO:0007669"/>
    <property type="project" value="TreeGrafter"/>
</dbReference>
<dbReference type="GO" id="GO:0009089">
    <property type="term" value="P:lysine biosynthetic process via diaminopimelate"/>
    <property type="evidence" value="ECO:0007669"/>
    <property type="project" value="UniProtKB-UniRule"/>
</dbReference>
<dbReference type="CDD" id="cd03891">
    <property type="entry name" value="M20_DapE_proteobac"/>
    <property type="match status" value="1"/>
</dbReference>
<dbReference type="FunFam" id="3.30.70.360:FF:000011">
    <property type="entry name" value="Succinyl-diaminopimelate desuccinylase"/>
    <property type="match status" value="1"/>
</dbReference>
<dbReference type="FunFam" id="3.40.630.10:FF:000005">
    <property type="entry name" value="Succinyl-diaminopimelate desuccinylase"/>
    <property type="match status" value="1"/>
</dbReference>
<dbReference type="Gene3D" id="3.30.70.360">
    <property type="match status" value="1"/>
</dbReference>
<dbReference type="Gene3D" id="3.40.630.10">
    <property type="entry name" value="Zn peptidases"/>
    <property type="match status" value="1"/>
</dbReference>
<dbReference type="HAMAP" id="MF_01690">
    <property type="entry name" value="DapE"/>
    <property type="match status" value="1"/>
</dbReference>
<dbReference type="InterPro" id="IPR001261">
    <property type="entry name" value="ArgE/DapE_CS"/>
</dbReference>
<dbReference type="InterPro" id="IPR036264">
    <property type="entry name" value="Bact_exopeptidase_dim_dom"/>
</dbReference>
<dbReference type="InterPro" id="IPR005941">
    <property type="entry name" value="DapE_proteobac"/>
</dbReference>
<dbReference type="InterPro" id="IPR002933">
    <property type="entry name" value="Peptidase_M20"/>
</dbReference>
<dbReference type="InterPro" id="IPR011650">
    <property type="entry name" value="Peptidase_M20_dimer"/>
</dbReference>
<dbReference type="InterPro" id="IPR050072">
    <property type="entry name" value="Peptidase_M20A"/>
</dbReference>
<dbReference type="NCBIfam" id="TIGR01246">
    <property type="entry name" value="dapE_proteo"/>
    <property type="match status" value="1"/>
</dbReference>
<dbReference type="NCBIfam" id="NF009557">
    <property type="entry name" value="PRK13009.1"/>
    <property type="match status" value="1"/>
</dbReference>
<dbReference type="PANTHER" id="PTHR43808">
    <property type="entry name" value="ACETYLORNITHINE DEACETYLASE"/>
    <property type="match status" value="1"/>
</dbReference>
<dbReference type="PANTHER" id="PTHR43808:SF31">
    <property type="entry name" value="N-ACETYL-L-CITRULLINE DEACETYLASE"/>
    <property type="match status" value="1"/>
</dbReference>
<dbReference type="Pfam" id="PF07687">
    <property type="entry name" value="M20_dimer"/>
    <property type="match status" value="1"/>
</dbReference>
<dbReference type="Pfam" id="PF01546">
    <property type="entry name" value="Peptidase_M20"/>
    <property type="match status" value="1"/>
</dbReference>
<dbReference type="SUPFAM" id="SSF55031">
    <property type="entry name" value="Bacterial exopeptidase dimerisation domain"/>
    <property type="match status" value="1"/>
</dbReference>
<dbReference type="SUPFAM" id="SSF53187">
    <property type="entry name" value="Zn-dependent exopeptidases"/>
    <property type="match status" value="1"/>
</dbReference>
<dbReference type="PROSITE" id="PS00758">
    <property type="entry name" value="ARGE_DAPE_CPG2_1"/>
    <property type="match status" value="1"/>
</dbReference>
<organism>
    <name type="scientific">Haemophilus influenzae (strain 86-028NP)</name>
    <dbReference type="NCBI Taxonomy" id="281310"/>
    <lineage>
        <taxon>Bacteria</taxon>
        <taxon>Pseudomonadati</taxon>
        <taxon>Pseudomonadota</taxon>
        <taxon>Gammaproteobacteria</taxon>
        <taxon>Pasteurellales</taxon>
        <taxon>Pasteurellaceae</taxon>
        <taxon>Haemophilus</taxon>
    </lineage>
</organism>
<accession>Q4QP83</accession>
<reference key="1">
    <citation type="journal article" date="2005" name="J. Bacteriol.">
        <title>Genomic sequence of an otitis media isolate of nontypeable Haemophilus influenzae: comparative study with H. influenzae serotype d, strain KW20.</title>
        <authorList>
            <person name="Harrison A."/>
            <person name="Dyer D.W."/>
            <person name="Gillaspy A."/>
            <person name="Ray W.C."/>
            <person name="Mungur R."/>
            <person name="Carson M.B."/>
            <person name="Zhong H."/>
            <person name="Gipson J."/>
            <person name="Gipson M."/>
            <person name="Johnson L.S."/>
            <person name="Lewis L."/>
            <person name="Bakaletz L.O."/>
            <person name="Munson R.S. Jr."/>
        </authorList>
    </citation>
    <scope>NUCLEOTIDE SEQUENCE [LARGE SCALE GENOMIC DNA]</scope>
    <source>
        <strain>86-028NP</strain>
    </source>
</reference>
<name>DAPE_HAEI8</name>
<proteinExistence type="inferred from homology"/>
<sequence>MREKVVSLAQDLIRRPSISPNDEGCQQIIAERLEKLGFQIEWMPFNDTLNLWAKHGTSEPVIAFAGHTDVVPTGDENQWSSPPFSAEIIDGMLYGRGAADMKGSLAAMIVAAEEYVKANPNHKGTIALLITSDEEAAAKDGTIRVVETLMARDEKITYCMVGEPSSAKNLGDVVKNGRRGSITGNLYIKGIQGHVAYPHLAENPIHKAAPFLQELTTYQWDKGNEFFPPTSLQIANIHAGTGSNNVIPAELYIQFNLRYCTEVTDEIIKQKVAEMLEKHNLKYRIEWNLSGKPFLTKPGKLLDSITSAIEETIGITPKAETGGGTSDGRFIALMGAEVVEFGPLNSTIHKVNECVSIEDLGKCGEIYHKMLVNLLDS</sequence>